<dbReference type="EC" id="2.7.1.50" evidence="1"/>
<dbReference type="EMBL" id="CP000853">
    <property type="protein sequence ID" value="ABW20225.1"/>
    <property type="molecule type" value="Genomic_DNA"/>
</dbReference>
<dbReference type="RefSeq" id="WP_012160532.1">
    <property type="nucleotide sequence ID" value="NC_009922.1"/>
</dbReference>
<dbReference type="SMR" id="A8MK93"/>
<dbReference type="STRING" id="350688.Clos_2694"/>
<dbReference type="KEGG" id="aoe:Clos_2694"/>
<dbReference type="eggNOG" id="COG2145">
    <property type="taxonomic scope" value="Bacteria"/>
</dbReference>
<dbReference type="HOGENOM" id="CLU_019943_0_0_9"/>
<dbReference type="OrthoDB" id="9778146at2"/>
<dbReference type="UniPathway" id="UPA00060">
    <property type="reaction ID" value="UER00139"/>
</dbReference>
<dbReference type="Proteomes" id="UP000000269">
    <property type="component" value="Chromosome"/>
</dbReference>
<dbReference type="GO" id="GO:0005524">
    <property type="term" value="F:ATP binding"/>
    <property type="evidence" value="ECO:0007669"/>
    <property type="project" value="UniProtKB-UniRule"/>
</dbReference>
<dbReference type="GO" id="GO:0004417">
    <property type="term" value="F:hydroxyethylthiazole kinase activity"/>
    <property type="evidence" value="ECO:0007669"/>
    <property type="project" value="UniProtKB-UniRule"/>
</dbReference>
<dbReference type="GO" id="GO:0000287">
    <property type="term" value="F:magnesium ion binding"/>
    <property type="evidence" value="ECO:0007669"/>
    <property type="project" value="UniProtKB-UniRule"/>
</dbReference>
<dbReference type="GO" id="GO:0009228">
    <property type="term" value="P:thiamine biosynthetic process"/>
    <property type="evidence" value="ECO:0007669"/>
    <property type="project" value="UniProtKB-KW"/>
</dbReference>
<dbReference type="GO" id="GO:0009229">
    <property type="term" value="P:thiamine diphosphate biosynthetic process"/>
    <property type="evidence" value="ECO:0007669"/>
    <property type="project" value="UniProtKB-UniRule"/>
</dbReference>
<dbReference type="CDD" id="cd01170">
    <property type="entry name" value="THZ_kinase"/>
    <property type="match status" value="1"/>
</dbReference>
<dbReference type="Gene3D" id="3.40.1190.20">
    <property type="match status" value="1"/>
</dbReference>
<dbReference type="HAMAP" id="MF_00228">
    <property type="entry name" value="Thz_kinase"/>
    <property type="match status" value="1"/>
</dbReference>
<dbReference type="InterPro" id="IPR000417">
    <property type="entry name" value="Hyethyz_kinase"/>
</dbReference>
<dbReference type="InterPro" id="IPR029056">
    <property type="entry name" value="Ribokinase-like"/>
</dbReference>
<dbReference type="NCBIfam" id="NF006830">
    <property type="entry name" value="PRK09355.1"/>
    <property type="match status" value="1"/>
</dbReference>
<dbReference type="NCBIfam" id="TIGR00694">
    <property type="entry name" value="thiM"/>
    <property type="match status" value="1"/>
</dbReference>
<dbReference type="Pfam" id="PF02110">
    <property type="entry name" value="HK"/>
    <property type="match status" value="1"/>
</dbReference>
<dbReference type="PIRSF" id="PIRSF000513">
    <property type="entry name" value="Thz_kinase"/>
    <property type="match status" value="1"/>
</dbReference>
<dbReference type="PRINTS" id="PR01099">
    <property type="entry name" value="HYETHTZKNASE"/>
</dbReference>
<dbReference type="SUPFAM" id="SSF53613">
    <property type="entry name" value="Ribokinase-like"/>
    <property type="match status" value="1"/>
</dbReference>
<sequence>MELKNELCTVLEQIKEKTPLVHHITNYVTVNDCANITLAIGGSPVMADDHKEVEDMVSIASAVVLNIGTLNERTIESFVLAGKKANELNIPVILDPVGAGATAFRSQTIEKILKEVKLSVLRGNMSEIKNIYGTGTQTKGVDSVDSSLDGGKEIAISLAKKLSCTVVITGEVDIVSDGNKTYAIQNGHKALSSITGTGCMSASLIGACCGTGKGILQGAILGTMIMGIAGEKANERLKVHEGLGSFKVYLMDAVSNFDQDDIRKRGKVDEI</sequence>
<name>THIM_ALKOO</name>
<proteinExistence type="inferred from homology"/>
<comment type="function">
    <text evidence="1">Catalyzes the phosphorylation of the hydroxyl group of 4-methyl-5-beta-hydroxyethylthiazole (THZ).</text>
</comment>
<comment type="catalytic activity">
    <reaction evidence="1">
        <text>5-(2-hydroxyethyl)-4-methylthiazole + ATP = 4-methyl-5-(2-phosphooxyethyl)-thiazole + ADP + H(+)</text>
        <dbReference type="Rhea" id="RHEA:24212"/>
        <dbReference type="ChEBI" id="CHEBI:15378"/>
        <dbReference type="ChEBI" id="CHEBI:17957"/>
        <dbReference type="ChEBI" id="CHEBI:30616"/>
        <dbReference type="ChEBI" id="CHEBI:58296"/>
        <dbReference type="ChEBI" id="CHEBI:456216"/>
        <dbReference type="EC" id="2.7.1.50"/>
    </reaction>
</comment>
<comment type="cofactor">
    <cofactor evidence="1">
        <name>Mg(2+)</name>
        <dbReference type="ChEBI" id="CHEBI:18420"/>
    </cofactor>
</comment>
<comment type="pathway">
    <text evidence="1">Cofactor biosynthesis; thiamine diphosphate biosynthesis; 4-methyl-5-(2-phosphoethyl)-thiazole from 5-(2-hydroxyethyl)-4-methylthiazole: step 1/1.</text>
</comment>
<comment type="similarity">
    <text evidence="1">Belongs to the Thz kinase family.</text>
</comment>
<accession>A8MK93</accession>
<keyword id="KW-0067">ATP-binding</keyword>
<keyword id="KW-0418">Kinase</keyword>
<keyword id="KW-0460">Magnesium</keyword>
<keyword id="KW-0479">Metal-binding</keyword>
<keyword id="KW-0547">Nucleotide-binding</keyword>
<keyword id="KW-1185">Reference proteome</keyword>
<keyword id="KW-0784">Thiamine biosynthesis</keyword>
<keyword id="KW-0808">Transferase</keyword>
<feature type="chain" id="PRO_1000058757" description="Hydroxyethylthiazole kinase">
    <location>
        <begin position="1"/>
        <end position="271"/>
    </location>
</feature>
<feature type="binding site" evidence="1">
    <location>
        <position position="46"/>
    </location>
    <ligand>
        <name>substrate</name>
    </ligand>
</feature>
<feature type="binding site" evidence="1">
    <location>
        <position position="122"/>
    </location>
    <ligand>
        <name>ATP</name>
        <dbReference type="ChEBI" id="CHEBI:30616"/>
    </ligand>
</feature>
<feature type="binding site" evidence="1">
    <location>
        <position position="169"/>
    </location>
    <ligand>
        <name>ATP</name>
        <dbReference type="ChEBI" id="CHEBI:30616"/>
    </ligand>
</feature>
<feature type="binding site" evidence="1">
    <location>
        <position position="196"/>
    </location>
    <ligand>
        <name>substrate</name>
    </ligand>
</feature>
<organism>
    <name type="scientific">Alkaliphilus oremlandii (strain OhILAs)</name>
    <name type="common">Clostridium oremlandii (strain OhILAs)</name>
    <dbReference type="NCBI Taxonomy" id="350688"/>
    <lineage>
        <taxon>Bacteria</taxon>
        <taxon>Bacillati</taxon>
        <taxon>Bacillota</taxon>
        <taxon>Clostridia</taxon>
        <taxon>Peptostreptococcales</taxon>
        <taxon>Natronincolaceae</taxon>
        <taxon>Alkaliphilus</taxon>
    </lineage>
</organism>
<reference key="1">
    <citation type="submission" date="2007-10" db="EMBL/GenBank/DDBJ databases">
        <title>Complete genome of Alkaliphilus oremlandii OhILAs.</title>
        <authorList>
            <person name="Copeland A."/>
            <person name="Lucas S."/>
            <person name="Lapidus A."/>
            <person name="Barry K."/>
            <person name="Detter J.C."/>
            <person name="Glavina del Rio T."/>
            <person name="Hammon N."/>
            <person name="Israni S."/>
            <person name="Dalin E."/>
            <person name="Tice H."/>
            <person name="Pitluck S."/>
            <person name="Chain P."/>
            <person name="Malfatti S."/>
            <person name="Shin M."/>
            <person name="Vergez L."/>
            <person name="Schmutz J."/>
            <person name="Larimer F."/>
            <person name="Land M."/>
            <person name="Hauser L."/>
            <person name="Kyrpides N."/>
            <person name="Mikhailova N."/>
            <person name="Stolz J.F."/>
            <person name="Dawson A."/>
            <person name="Fisher E."/>
            <person name="Crable B."/>
            <person name="Perera E."/>
            <person name="Lisak J."/>
            <person name="Ranganathan M."/>
            <person name="Basu P."/>
            <person name="Richardson P."/>
        </authorList>
    </citation>
    <scope>NUCLEOTIDE SEQUENCE [LARGE SCALE GENOMIC DNA]</scope>
    <source>
        <strain>OhILAs</strain>
    </source>
</reference>
<gene>
    <name evidence="1" type="primary">thiM</name>
    <name type="ordered locus">Clos_2694</name>
</gene>
<protein>
    <recommendedName>
        <fullName evidence="1">Hydroxyethylthiazole kinase</fullName>
        <ecNumber evidence="1">2.7.1.50</ecNumber>
    </recommendedName>
    <alternativeName>
        <fullName evidence="1">4-methyl-5-beta-hydroxyethylthiazole kinase</fullName>
        <shortName evidence="1">TH kinase</shortName>
        <shortName evidence="1">Thz kinase</shortName>
    </alternativeName>
</protein>
<evidence type="ECO:0000255" key="1">
    <source>
        <dbReference type="HAMAP-Rule" id="MF_00228"/>
    </source>
</evidence>